<sequence length="87" mass="9820">MSETKNVRTLQGKVVSDKMDKTVTVLVERKVKHSLYGKIIRLSTKIHAHDENNQYGIGDVVVISESRPLSKTKSWVVSELVEKARSI</sequence>
<protein>
    <recommendedName>
        <fullName evidence="1">Small ribosomal subunit protein uS17</fullName>
    </recommendedName>
    <alternativeName>
        <fullName evidence="2">30S ribosomal protein S17</fullName>
    </alternativeName>
</protein>
<name>RS17_NEIG2</name>
<reference key="1">
    <citation type="journal article" date="2008" name="J. Bacteriol.">
        <title>Complete genome sequence of Neisseria gonorrhoeae NCCP11945.</title>
        <authorList>
            <person name="Chung G.T."/>
            <person name="Yoo J.S."/>
            <person name="Oh H.B."/>
            <person name="Lee Y.S."/>
            <person name="Cha S.H."/>
            <person name="Kim S.J."/>
            <person name="Yoo C.K."/>
        </authorList>
    </citation>
    <scope>NUCLEOTIDE SEQUENCE [LARGE SCALE GENOMIC DNA]</scope>
    <source>
        <strain>NCCP11945</strain>
    </source>
</reference>
<evidence type="ECO:0000255" key="1">
    <source>
        <dbReference type="HAMAP-Rule" id="MF_01345"/>
    </source>
</evidence>
<evidence type="ECO:0000305" key="2"/>
<organism>
    <name type="scientific">Neisseria gonorrhoeae (strain NCCP11945)</name>
    <dbReference type="NCBI Taxonomy" id="521006"/>
    <lineage>
        <taxon>Bacteria</taxon>
        <taxon>Pseudomonadati</taxon>
        <taxon>Pseudomonadota</taxon>
        <taxon>Betaproteobacteria</taxon>
        <taxon>Neisseriales</taxon>
        <taxon>Neisseriaceae</taxon>
        <taxon>Neisseria</taxon>
    </lineage>
</organism>
<gene>
    <name evidence="1" type="primary">rpsQ</name>
    <name type="ordered locus">NGK_2444</name>
</gene>
<proteinExistence type="inferred from homology"/>
<feature type="chain" id="PRO_1000143276" description="Small ribosomal subunit protein uS17">
    <location>
        <begin position="1"/>
        <end position="87"/>
    </location>
</feature>
<keyword id="KW-0687">Ribonucleoprotein</keyword>
<keyword id="KW-0689">Ribosomal protein</keyword>
<keyword id="KW-0694">RNA-binding</keyword>
<keyword id="KW-0699">rRNA-binding</keyword>
<comment type="function">
    <text evidence="1">One of the primary rRNA binding proteins, it binds specifically to the 5'-end of 16S ribosomal RNA.</text>
</comment>
<comment type="subunit">
    <text evidence="1">Part of the 30S ribosomal subunit.</text>
</comment>
<comment type="similarity">
    <text evidence="1">Belongs to the universal ribosomal protein uS17 family.</text>
</comment>
<accession>B4RQY6</accession>
<dbReference type="EMBL" id="CP001050">
    <property type="protein sequence ID" value="ACF31045.1"/>
    <property type="molecule type" value="Genomic_DNA"/>
</dbReference>
<dbReference type="RefSeq" id="WP_003690077.1">
    <property type="nucleotide sequence ID" value="NC_011035.1"/>
</dbReference>
<dbReference type="SMR" id="B4RQY6"/>
<dbReference type="GeneID" id="66754304"/>
<dbReference type="KEGG" id="ngk:NGK_2444"/>
<dbReference type="HOGENOM" id="CLU_073626_1_1_4"/>
<dbReference type="Proteomes" id="UP000002564">
    <property type="component" value="Chromosome"/>
</dbReference>
<dbReference type="GO" id="GO:0022627">
    <property type="term" value="C:cytosolic small ribosomal subunit"/>
    <property type="evidence" value="ECO:0007669"/>
    <property type="project" value="TreeGrafter"/>
</dbReference>
<dbReference type="GO" id="GO:0019843">
    <property type="term" value="F:rRNA binding"/>
    <property type="evidence" value="ECO:0007669"/>
    <property type="project" value="UniProtKB-UniRule"/>
</dbReference>
<dbReference type="GO" id="GO:0003735">
    <property type="term" value="F:structural constituent of ribosome"/>
    <property type="evidence" value="ECO:0007669"/>
    <property type="project" value="InterPro"/>
</dbReference>
<dbReference type="GO" id="GO:0006412">
    <property type="term" value="P:translation"/>
    <property type="evidence" value="ECO:0007669"/>
    <property type="project" value="UniProtKB-UniRule"/>
</dbReference>
<dbReference type="CDD" id="cd00364">
    <property type="entry name" value="Ribosomal_uS17"/>
    <property type="match status" value="1"/>
</dbReference>
<dbReference type="Gene3D" id="2.40.50.140">
    <property type="entry name" value="Nucleic acid-binding proteins"/>
    <property type="match status" value="1"/>
</dbReference>
<dbReference type="HAMAP" id="MF_01345_B">
    <property type="entry name" value="Ribosomal_uS17_B"/>
    <property type="match status" value="1"/>
</dbReference>
<dbReference type="InterPro" id="IPR012340">
    <property type="entry name" value="NA-bd_OB-fold"/>
</dbReference>
<dbReference type="InterPro" id="IPR000266">
    <property type="entry name" value="Ribosomal_uS17"/>
</dbReference>
<dbReference type="InterPro" id="IPR019984">
    <property type="entry name" value="Ribosomal_uS17_bact/chlr"/>
</dbReference>
<dbReference type="InterPro" id="IPR019979">
    <property type="entry name" value="Ribosomal_uS17_CS"/>
</dbReference>
<dbReference type="NCBIfam" id="NF004123">
    <property type="entry name" value="PRK05610.1"/>
    <property type="match status" value="1"/>
</dbReference>
<dbReference type="NCBIfam" id="TIGR03635">
    <property type="entry name" value="uS17_bact"/>
    <property type="match status" value="1"/>
</dbReference>
<dbReference type="PANTHER" id="PTHR10744">
    <property type="entry name" value="40S RIBOSOMAL PROTEIN S11 FAMILY MEMBER"/>
    <property type="match status" value="1"/>
</dbReference>
<dbReference type="PANTHER" id="PTHR10744:SF1">
    <property type="entry name" value="SMALL RIBOSOMAL SUBUNIT PROTEIN US17M"/>
    <property type="match status" value="1"/>
</dbReference>
<dbReference type="Pfam" id="PF00366">
    <property type="entry name" value="Ribosomal_S17"/>
    <property type="match status" value="1"/>
</dbReference>
<dbReference type="PRINTS" id="PR00973">
    <property type="entry name" value="RIBOSOMALS17"/>
</dbReference>
<dbReference type="SUPFAM" id="SSF50249">
    <property type="entry name" value="Nucleic acid-binding proteins"/>
    <property type="match status" value="1"/>
</dbReference>
<dbReference type="PROSITE" id="PS00056">
    <property type="entry name" value="RIBOSOMAL_S17"/>
    <property type="match status" value="1"/>
</dbReference>